<accession>O73723</accession>
<gene>
    <name type="primary">actr3</name>
    <name type="synonym">arp3</name>
</gene>
<comment type="function">
    <text evidence="1 2">ATP-binding component of the Arp2/3 complex, a multiprotein complex that mediates actin polymerization upon stimulation by nucleation-promoting factor (NPF). The Arp2/3 complex mediates the formation of branched actin networks in the cytoplasm, providing the force for cell motility (By similarity). Seems to contact the pointed end of the daughter actin filament (By similarity). In addition to its role in the cytoplasmic cytoskeleton, the Arp2/3 complex also promotes actin polymerization in the nucleus, thereby regulating gene transcription and repair of damaged DNA (By similarity). The Arp2/3 complex promotes homologous recombination (HR) repair in response to DNA damage by promoting nuclear actin polymerization, leading to drive motility of double-strand breaks (DSBs) (By similarity).</text>
</comment>
<comment type="subunit">
    <text evidence="2">Component of the Arp2/3 complex composed of actr2/arp2, actr3/arp3, arpc1b, arpc2, arpc3, arpc4 and arpc5.</text>
</comment>
<comment type="subcellular location">
    <subcellularLocation>
        <location evidence="2">Cytoplasm</location>
        <location evidence="2">Cytoskeleton</location>
    </subcellularLocation>
    <subcellularLocation>
        <location evidence="2">Cell projection</location>
    </subcellularLocation>
    <subcellularLocation>
        <location evidence="1">Nucleus</location>
    </subcellularLocation>
</comment>
<comment type="similarity">
    <text evidence="3">Belongs to the actin family. ARP3 subfamily.</text>
</comment>
<keyword id="KW-0009">Actin-binding</keyword>
<keyword id="KW-0067">ATP-binding</keyword>
<keyword id="KW-0966">Cell projection</keyword>
<keyword id="KW-0963">Cytoplasm</keyword>
<keyword id="KW-0206">Cytoskeleton</keyword>
<keyword id="KW-0547">Nucleotide-binding</keyword>
<keyword id="KW-0539">Nucleus</keyword>
<keyword id="KW-1185">Reference proteome</keyword>
<proteinExistence type="inferred from homology"/>
<feature type="chain" id="PRO_0000089082" description="Actin-related protein 3">
    <location>
        <begin position="1"/>
        <end position="418"/>
    </location>
</feature>
<organism>
    <name type="scientific">Takifugu rubripes</name>
    <name type="common">Japanese pufferfish</name>
    <name type="synonym">Fugu rubripes</name>
    <dbReference type="NCBI Taxonomy" id="31033"/>
    <lineage>
        <taxon>Eukaryota</taxon>
        <taxon>Metazoa</taxon>
        <taxon>Chordata</taxon>
        <taxon>Craniata</taxon>
        <taxon>Vertebrata</taxon>
        <taxon>Euteleostomi</taxon>
        <taxon>Actinopterygii</taxon>
        <taxon>Neopterygii</taxon>
        <taxon>Teleostei</taxon>
        <taxon>Neoteleostei</taxon>
        <taxon>Acanthomorphata</taxon>
        <taxon>Eupercaria</taxon>
        <taxon>Tetraodontiformes</taxon>
        <taxon>Tetradontoidea</taxon>
        <taxon>Tetraodontidae</taxon>
        <taxon>Takifugu</taxon>
    </lineage>
</organism>
<protein>
    <recommendedName>
        <fullName>Actin-related protein 3</fullName>
    </recommendedName>
    <alternativeName>
        <fullName>Actin-like protein 3</fullName>
    </alternativeName>
</protein>
<sequence length="418" mass="47465">MAGRLPACVVDCGTGYTKLGYAGNTEPQFIMPSCIAIKESSKVGDQAQRRMMRGVDDLDFFIGDEAIDKPPYATKWPIRHGIVEDWDLMERFMEQIIFKYLRAEPEDHYFLLTEPPLNTPENREYTAEIMFESFNVPGLYIAVQAVLALAASWTSRQVGERTLTGTVIDSGDGVTHVIPVAEGYVIGSCIKHIPIAGRDITYFTQQLLREREVGIPPEQSLETAKAVKERFSYVCPDLVKEFNKYDTDGSKWIKQYTGINAITKKEFTIDVGYERFLGPEIFFHPEFANPDFTQPISEVVDEVIQNCPIDVRRPLYKNIVLSGGSTMFRDFGRRLQRDLKRTVDARLKMSEELSGGKLKPKPIDVQVITHHMQRYAVWFGGSMLASTPEFYQVCHTKKDYEEIGPSICRHNPVFGVMS</sequence>
<name>ARP3_TAKRU</name>
<reference key="1">
    <citation type="journal article" date="1998" name="Gene">
        <title>Genomic structure and sequence of the pufferfish (Fugu rubripes) gene encoding an actin-related protein.</title>
        <authorList>
            <person name="Venkatesh B."/>
            <person name="Brenner S."/>
        </authorList>
    </citation>
    <scope>NUCLEOTIDE SEQUENCE [GENOMIC DNA]</scope>
</reference>
<evidence type="ECO:0000250" key="1">
    <source>
        <dbReference type="UniProtKB" id="P61158"/>
    </source>
</evidence>
<evidence type="ECO:0000250" key="2">
    <source>
        <dbReference type="UniProtKB" id="Q801P7"/>
    </source>
</evidence>
<evidence type="ECO:0000305" key="3"/>
<dbReference type="EMBL" id="AF034581">
    <property type="protein sequence ID" value="AAC18521.1"/>
    <property type="molecule type" value="Genomic_DNA"/>
</dbReference>
<dbReference type="PIR" id="JC6567">
    <property type="entry name" value="JC6567"/>
</dbReference>
<dbReference type="SMR" id="O73723"/>
<dbReference type="STRING" id="31033.ENSTRUP00000062708"/>
<dbReference type="eggNOG" id="KOG0678">
    <property type="taxonomic scope" value="Eukaryota"/>
</dbReference>
<dbReference type="InParanoid" id="O73723"/>
<dbReference type="Proteomes" id="UP000005226">
    <property type="component" value="Unplaced"/>
</dbReference>
<dbReference type="GO" id="GO:0005885">
    <property type="term" value="C:Arp2/3 protein complex"/>
    <property type="evidence" value="ECO:0000250"/>
    <property type="project" value="UniProtKB"/>
</dbReference>
<dbReference type="GO" id="GO:0042995">
    <property type="term" value="C:cell projection"/>
    <property type="evidence" value="ECO:0007669"/>
    <property type="project" value="UniProtKB-SubCell"/>
</dbReference>
<dbReference type="GO" id="GO:0005737">
    <property type="term" value="C:cytoplasm"/>
    <property type="evidence" value="ECO:0000250"/>
    <property type="project" value="UniProtKB"/>
</dbReference>
<dbReference type="GO" id="GO:0005634">
    <property type="term" value="C:nucleus"/>
    <property type="evidence" value="ECO:0000250"/>
    <property type="project" value="UniProtKB"/>
</dbReference>
<dbReference type="GO" id="GO:0035861">
    <property type="term" value="C:site of double-strand break"/>
    <property type="evidence" value="ECO:0000250"/>
    <property type="project" value="UniProtKB"/>
</dbReference>
<dbReference type="GO" id="GO:0003779">
    <property type="term" value="F:actin binding"/>
    <property type="evidence" value="ECO:0007669"/>
    <property type="project" value="UniProtKB-KW"/>
</dbReference>
<dbReference type="GO" id="GO:0005524">
    <property type="term" value="F:ATP binding"/>
    <property type="evidence" value="ECO:0007669"/>
    <property type="project" value="UniProtKB-KW"/>
</dbReference>
<dbReference type="GO" id="GO:0034314">
    <property type="term" value="P:Arp2/3 complex-mediated actin nucleation"/>
    <property type="evidence" value="ECO:0000250"/>
    <property type="project" value="UniProtKB"/>
</dbReference>
<dbReference type="GO" id="GO:0045944">
    <property type="term" value="P:positive regulation of transcription by RNA polymerase II"/>
    <property type="evidence" value="ECO:0000250"/>
    <property type="project" value="UniProtKB"/>
</dbReference>
<dbReference type="CDD" id="cd10221">
    <property type="entry name" value="ASKHA_NBD_Arp3-like"/>
    <property type="match status" value="1"/>
</dbReference>
<dbReference type="FunFam" id="3.30.420.40:FF:000029">
    <property type="entry name" value="Actin-related protein 3"/>
    <property type="match status" value="1"/>
</dbReference>
<dbReference type="FunFam" id="3.30.420.40:FF:000315">
    <property type="entry name" value="Actin-related protein 3"/>
    <property type="match status" value="1"/>
</dbReference>
<dbReference type="FunFam" id="3.30.420.40:FF:000803">
    <property type="entry name" value="Actin-related protein 3"/>
    <property type="match status" value="1"/>
</dbReference>
<dbReference type="FunFam" id="3.90.640.10:FF:000006">
    <property type="entry name" value="Actin-related protein 3 (ARP3)"/>
    <property type="match status" value="1"/>
</dbReference>
<dbReference type="FunFam" id="2.30.36.70:FF:000002">
    <property type="entry name" value="actin-related protein 3 isoform X1"/>
    <property type="match status" value="1"/>
</dbReference>
<dbReference type="Gene3D" id="3.30.420.40">
    <property type="match status" value="2"/>
</dbReference>
<dbReference type="Gene3D" id="2.30.36.70">
    <property type="entry name" value="Actin, Chain A, domain 2"/>
    <property type="match status" value="1"/>
</dbReference>
<dbReference type="Gene3D" id="3.90.640.10">
    <property type="entry name" value="Actin, Chain A, domain 4"/>
    <property type="match status" value="1"/>
</dbReference>
<dbReference type="InterPro" id="IPR004000">
    <property type="entry name" value="Actin"/>
</dbReference>
<dbReference type="InterPro" id="IPR020902">
    <property type="entry name" value="Actin/actin-like_CS"/>
</dbReference>
<dbReference type="InterPro" id="IPR043129">
    <property type="entry name" value="ATPase_NBD"/>
</dbReference>
<dbReference type="PANTHER" id="PTHR11937">
    <property type="entry name" value="ACTIN"/>
    <property type="match status" value="1"/>
</dbReference>
<dbReference type="Pfam" id="PF00022">
    <property type="entry name" value="Actin"/>
    <property type="match status" value="2"/>
</dbReference>
<dbReference type="SMART" id="SM00268">
    <property type="entry name" value="ACTIN"/>
    <property type="match status" value="1"/>
</dbReference>
<dbReference type="SUPFAM" id="SSF53067">
    <property type="entry name" value="Actin-like ATPase domain"/>
    <property type="match status" value="2"/>
</dbReference>
<dbReference type="PROSITE" id="PS01132">
    <property type="entry name" value="ACTINS_ACT_LIKE"/>
    <property type="match status" value="1"/>
</dbReference>